<proteinExistence type="evidence at protein level"/>
<name>VAPC1_HAEIN</name>
<accession>Q57122</accession>
<accession>O05016</accession>
<gene>
    <name evidence="2" type="primary">vapC1</name>
    <name type="ordered locus">HI_0322</name>
</gene>
<sequence>MIYMLDTNIIIYLMKNRPKIIAERVSQLLPNDRLVMSFITYAELIKGAFGSQNYEQSIRAIELLTERVNVLYPNEQICLHYGKWANTLKKQGRPIGNNDLWFACHALSLNAVLITHNVKEFQRITDLQWQDWTK</sequence>
<reference key="1">
    <citation type="journal article" date="1995" name="Science">
        <title>Whole-genome random sequencing and assembly of Haemophilus influenzae Rd.</title>
        <authorList>
            <person name="Fleischmann R.D."/>
            <person name="Adams M.D."/>
            <person name="White O."/>
            <person name="Clayton R.A."/>
            <person name="Kirkness E.F."/>
            <person name="Kerlavage A.R."/>
            <person name="Bult C.J."/>
            <person name="Tomb J.-F."/>
            <person name="Dougherty B.A."/>
            <person name="Merrick J.M."/>
            <person name="McKenney K."/>
            <person name="Sutton G.G."/>
            <person name="FitzHugh W."/>
            <person name="Fields C.A."/>
            <person name="Gocayne J.D."/>
            <person name="Scott J.D."/>
            <person name="Shirley R."/>
            <person name="Liu L.-I."/>
            <person name="Glodek A."/>
            <person name="Kelley J.M."/>
            <person name="Weidman J.F."/>
            <person name="Phillips C.A."/>
            <person name="Spriggs T."/>
            <person name="Hedblom E."/>
            <person name="Cotton M.D."/>
            <person name="Utterback T.R."/>
            <person name="Hanna M.C."/>
            <person name="Nguyen D.T."/>
            <person name="Saudek D.M."/>
            <person name="Brandon R.C."/>
            <person name="Fine L.D."/>
            <person name="Fritchman J.L."/>
            <person name="Fuhrmann J.L."/>
            <person name="Geoghagen N.S.M."/>
            <person name="Gnehm C.L."/>
            <person name="McDonald L.A."/>
            <person name="Small K.V."/>
            <person name="Fraser C.M."/>
            <person name="Smith H.O."/>
            <person name="Venter J.C."/>
        </authorList>
    </citation>
    <scope>NUCLEOTIDE SEQUENCE [LARGE SCALE GENOMIC DNA]</scope>
    <source>
        <strain>ATCC 51907 / DSM 11121 / KW20 / Rd</strain>
    </source>
</reference>
<dbReference type="EC" id="3.1.-.-" evidence="2"/>
<dbReference type="EMBL" id="L42023">
    <property type="protein sequence ID" value="AAC21985.1"/>
    <property type="molecule type" value="Genomic_DNA"/>
</dbReference>
<dbReference type="PIR" id="G64061">
    <property type="entry name" value="G64061"/>
</dbReference>
<dbReference type="RefSeq" id="NP_438487.1">
    <property type="nucleotide sequence ID" value="NC_000907.1"/>
</dbReference>
<dbReference type="PDB" id="6NKL">
    <property type="method" value="X-ray"/>
    <property type="resolution" value="2.20 A"/>
    <property type="chains" value="A/B=1-134"/>
</dbReference>
<dbReference type="PDBsum" id="6NKL"/>
<dbReference type="SMR" id="Q57122"/>
<dbReference type="STRING" id="71421.HI_0322"/>
<dbReference type="EnsemblBacteria" id="AAC21985">
    <property type="protein sequence ID" value="AAC21985"/>
    <property type="gene ID" value="HI_0322"/>
</dbReference>
<dbReference type="KEGG" id="hin:HI_0322"/>
<dbReference type="PATRIC" id="fig|71421.8.peg.339"/>
<dbReference type="eggNOG" id="COG1487">
    <property type="taxonomic scope" value="Bacteria"/>
</dbReference>
<dbReference type="HOGENOM" id="CLU_118482_5_0_6"/>
<dbReference type="OrthoDB" id="9796690at2"/>
<dbReference type="PhylomeDB" id="Q57122"/>
<dbReference type="BioCyc" id="HINF71421:G1GJ1-338-MONOMER"/>
<dbReference type="Proteomes" id="UP000000579">
    <property type="component" value="Chromosome"/>
</dbReference>
<dbReference type="GO" id="GO:0000287">
    <property type="term" value="F:magnesium ion binding"/>
    <property type="evidence" value="ECO:0007669"/>
    <property type="project" value="UniProtKB-UniRule"/>
</dbReference>
<dbReference type="GO" id="GO:0004521">
    <property type="term" value="F:RNA endonuclease activity"/>
    <property type="evidence" value="ECO:0000318"/>
    <property type="project" value="GO_Central"/>
</dbReference>
<dbReference type="CDD" id="cd18735">
    <property type="entry name" value="PIN_HiVapC1-like"/>
    <property type="match status" value="1"/>
</dbReference>
<dbReference type="FunFam" id="3.40.50.1010:FF:000107">
    <property type="entry name" value="Ribonuclease VapC1"/>
    <property type="match status" value="1"/>
</dbReference>
<dbReference type="Gene3D" id="3.40.50.1010">
    <property type="entry name" value="5'-nuclease"/>
    <property type="match status" value="1"/>
</dbReference>
<dbReference type="HAMAP" id="MF_00265">
    <property type="entry name" value="VapC_Nob1"/>
    <property type="match status" value="1"/>
</dbReference>
<dbReference type="InterPro" id="IPR029060">
    <property type="entry name" value="PIN-like_dom_sf"/>
</dbReference>
<dbReference type="InterPro" id="IPR002716">
    <property type="entry name" value="PIN_dom"/>
</dbReference>
<dbReference type="InterPro" id="IPR050556">
    <property type="entry name" value="Type_II_TA_system_RNase"/>
</dbReference>
<dbReference type="InterPro" id="IPR022907">
    <property type="entry name" value="VapC_family"/>
</dbReference>
<dbReference type="PANTHER" id="PTHR33653">
    <property type="entry name" value="RIBONUCLEASE VAPC2"/>
    <property type="match status" value="1"/>
</dbReference>
<dbReference type="PANTHER" id="PTHR33653:SF1">
    <property type="entry name" value="RIBONUCLEASE VAPC2"/>
    <property type="match status" value="1"/>
</dbReference>
<dbReference type="Pfam" id="PF01850">
    <property type="entry name" value="PIN"/>
    <property type="match status" value="1"/>
</dbReference>
<dbReference type="SUPFAM" id="SSF88723">
    <property type="entry name" value="PIN domain-like"/>
    <property type="match status" value="1"/>
</dbReference>
<organism>
    <name type="scientific">Haemophilus influenzae (strain ATCC 51907 / DSM 11121 / KW20 / Rd)</name>
    <dbReference type="NCBI Taxonomy" id="71421"/>
    <lineage>
        <taxon>Bacteria</taxon>
        <taxon>Pseudomonadati</taxon>
        <taxon>Pseudomonadota</taxon>
        <taxon>Gammaproteobacteria</taxon>
        <taxon>Pasteurellales</taxon>
        <taxon>Pasteurellaceae</taxon>
        <taxon>Haemophilus</taxon>
    </lineage>
</organism>
<comment type="function">
    <text evidence="1">Toxic component of a type II toxin-antitoxin (TA) system. Acts as an RNase, its toxic effect is neutralized by VapB1 antitoxin (By similarity).</text>
</comment>
<comment type="cofactor">
    <cofactor evidence="2">
        <name>Mg(2+)</name>
        <dbReference type="ChEBI" id="CHEBI:18420"/>
    </cofactor>
</comment>
<comment type="similarity">
    <text evidence="2">Belongs to the PINc/VapC protein family.</text>
</comment>
<keyword id="KW-0002">3D-structure</keyword>
<keyword id="KW-0378">Hydrolase</keyword>
<keyword id="KW-0460">Magnesium</keyword>
<keyword id="KW-0479">Metal-binding</keyword>
<keyword id="KW-0540">Nuclease</keyword>
<keyword id="KW-1185">Reference proteome</keyword>
<keyword id="KW-1277">Toxin-antitoxin system</keyword>
<protein>
    <recommendedName>
        <fullName evidence="2">Ribonuclease VapC1</fullName>
        <shortName evidence="2">RNase VapC1</shortName>
        <ecNumber evidence="2">3.1.-.-</ecNumber>
    </recommendedName>
    <alternativeName>
        <fullName evidence="2">Toxin VapC1</fullName>
    </alternativeName>
</protein>
<evidence type="ECO:0000250" key="1">
    <source>
        <dbReference type="UniProtKB" id="Q4QNL7"/>
    </source>
</evidence>
<evidence type="ECO:0000255" key="2">
    <source>
        <dbReference type="HAMAP-Rule" id="MF_00265"/>
    </source>
</evidence>
<evidence type="ECO:0007829" key="3">
    <source>
        <dbReference type="PDB" id="6NKL"/>
    </source>
</evidence>
<feature type="chain" id="PRO_0000077910" description="Ribonuclease VapC1">
    <location>
        <begin position="1"/>
        <end position="134"/>
    </location>
</feature>
<feature type="domain" description="PINc" evidence="2">
    <location>
        <begin position="3"/>
        <end position="132"/>
    </location>
</feature>
<feature type="binding site" evidence="2">
    <location>
        <position position="6"/>
    </location>
    <ligand>
        <name>Mg(2+)</name>
        <dbReference type="ChEBI" id="CHEBI:18420"/>
    </ligand>
</feature>
<feature type="binding site" evidence="2">
    <location>
        <position position="99"/>
    </location>
    <ligand>
        <name>Mg(2+)</name>
        <dbReference type="ChEBI" id="CHEBI:18420"/>
    </ligand>
</feature>
<feature type="strand" evidence="3">
    <location>
        <begin position="2"/>
        <end position="5"/>
    </location>
</feature>
<feature type="helix" evidence="3">
    <location>
        <begin position="7"/>
        <end position="16"/>
    </location>
</feature>
<feature type="helix" evidence="3">
    <location>
        <begin position="19"/>
        <end position="26"/>
    </location>
</feature>
<feature type="strand" evidence="3">
    <location>
        <begin position="33"/>
        <end position="37"/>
    </location>
</feature>
<feature type="helix" evidence="3">
    <location>
        <begin position="38"/>
        <end position="49"/>
    </location>
</feature>
<feature type="helix" evidence="3">
    <location>
        <begin position="54"/>
        <end position="67"/>
    </location>
</feature>
<feature type="strand" evidence="3">
    <location>
        <begin position="68"/>
        <end position="71"/>
    </location>
</feature>
<feature type="helix" evidence="3">
    <location>
        <begin position="76"/>
        <end position="91"/>
    </location>
</feature>
<feature type="helix" evidence="3">
    <location>
        <begin position="97"/>
        <end position="108"/>
    </location>
</feature>
<feature type="strand" evidence="3">
    <location>
        <begin position="112"/>
        <end position="114"/>
    </location>
</feature>
<feature type="helix" evidence="3">
    <location>
        <begin position="118"/>
        <end position="122"/>
    </location>
</feature>
<feature type="strand" evidence="3">
    <location>
        <begin position="128"/>
        <end position="130"/>
    </location>
</feature>